<gene>
    <name type="primary">US12</name>
</gene>
<comment type="function">
    <text evidence="1">Plays a role in the inhibition of host immune response. Binds specifically to transporters associated with antigen processing (TAP), thereby blocking peptide-binding and translocation by TAP as well as subsequent loading of peptides onto MHC class I molecules. Empty MHC I molecules are retained in the endoplasmic reticulum and ultimately directed to proteasomal degradation. In consequence, infected cells are masked for immune recognition by cytotoxic T-lymphocytes.</text>
</comment>
<comment type="subunit">
    <text evidence="1">Interacts with host TAP1 and TAP2; these interactions inhibit the loading of peptides onto MHC class I molecules.</text>
</comment>
<comment type="subcellular location">
    <subcellularLocation>
        <location evidence="1">Host cytoplasm</location>
    </subcellularLocation>
    <subcellularLocation>
        <location evidence="1">Host nucleus</location>
    </subcellularLocation>
</comment>
<comment type="domain">
    <text evidence="2">The N-terminal active domain blocks peptide binding to and peptide transport by TAP.</text>
</comment>
<comment type="similarity">
    <text evidence="4">Belongs to the herpesviridae US12 family.</text>
</comment>
<sequence length="78" mass="8572">MSSLYLATVDAFLRNPHTRHRTCADLRRELDAYADEERREAAKAIAHPDRPLLAPPSAPPNHSHLAARETAPPPAATP</sequence>
<name>ICP47_HSV2S</name>
<reference key="1">
    <citation type="submission" date="2003-09" db="EMBL/GenBank/DDBJ databases">
        <title>Identification of an ICP47 homolog in Simian agent 8 (SA8).</title>
        <authorList>
            <person name="Bigger J.E."/>
            <person name="Martin D.W."/>
        </authorList>
    </citation>
    <scope>NUCLEOTIDE SEQUENCE [GENOMIC DNA]</scope>
    <source>
        <strain>Isolate B264</strain>
    </source>
</reference>
<organism>
    <name type="scientific">Herpes simplex virus type 2 (strain SA8)</name>
    <name type="common">Simian agent 8</name>
    <dbReference type="NCBI Taxonomy" id="10316"/>
    <lineage>
        <taxon>Viruses</taxon>
        <taxon>Duplodnaviria</taxon>
        <taxon>Heunggongvirae</taxon>
        <taxon>Peploviricota</taxon>
        <taxon>Herviviricetes</taxon>
        <taxon>Herpesvirales</taxon>
        <taxon>Orthoherpesviridae</taxon>
        <taxon>Alphaherpesvirinae</taxon>
        <taxon>Simplexvirus</taxon>
        <taxon>Simplexvirus humanalpha2</taxon>
        <taxon>Human herpesvirus 2</taxon>
    </lineage>
</organism>
<protein>
    <recommendedName>
        <fullName>ICP47 protein</fullName>
    </recommendedName>
    <alternativeName>
        <fullName>Immediate-early protein IE12</fullName>
    </alternativeName>
    <alternativeName>
        <fullName>Immediate-early-5</fullName>
    </alternativeName>
    <alternativeName>
        <fullName>Infected cell protein 47</fullName>
    </alternativeName>
    <alternativeName>
        <fullName>US12 protein</fullName>
    </alternativeName>
    <alternativeName>
        <fullName>Vmw12</fullName>
    </alternativeName>
</protein>
<organismHost>
    <name type="scientific">Homo sapiens</name>
    <name type="common">Human</name>
    <dbReference type="NCBI Taxonomy" id="9606"/>
</organismHost>
<proteinExistence type="inferred from homology"/>
<evidence type="ECO:0000250" key="1">
    <source>
        <dbReference type="UniProtKB" id="P03170"/>
    </source>
</evidence>
<evidence type="ECO:0000250" key="2">
    <source>
        <dbReference type="UniProtKB" id="P14345"/>
    </source>
</evidence>
<evidence type="ECO:0000256" key="3">
    <source>
        <dbReference type="SAM" id="MobiDB-lite"/>
    </source>
</evidence>
<evidence type="ECO:0000305" key="4"/>
<feature type="chain" id="PRO_0000115814" description="ICP47 protein">
    <location>
        <begin position="1"/>
        <end position="78"/>
    </location>
</feature>
<feature type="region of interest" description="Active domain" evidence="2">
    <location>
        <begin position="3"/>
        <end position="36"/>
    </location>
</feature>
<feature type="region of interest" description="Disordered" evidence="3">
    <location>
        <begin position="39"/>
        <end position="78"/>
    </location>
</feature>
<feature type="compositionally biased region" description="Basic and acidic residues" evidence="3">
    <location>
        <begin position="39"/>
        <end position="50"/>
    </location>
</feature>
<keyword id="KW-0244">Early protein</keyword>
<keyword id="KW-1035">Host cytoplasm</keyword>
<keyword id="KW-1048">Host nucleus</keyword>
<keyword id="KW-0945">Host-virus interaction</keyword>
<keyword id="KW-1080">Inhibition of host adaptive immune response by virus</keyword>
<keyword id="KW-1107">Inhibition of host TAP by virus</keyword>
<keyword id="KW-0899">Viral immunoevasion</keyword>
<dbReference type="EMBL" id="AY387672">
    <property type="protein sequence ID" value="AAQ90018.1"/>
    <property type="molecule type" value="Genomic_DNA"/>
</dbReference>
<dbReference type="SMR" id="P60504"/>
<dbReference type="KEGG" id="vg:3190363"/>
<dbReference type="GO" id="GO:0030430">
    <property type="term" value="C:host cell cytoplasm"/>
    <property type="evidence" value="ECO:0007669"/>
    <property type="project" value="UniProtKB-SubCell"/>
</dbReference>
<dbReference type="GO" id="GO:0042025">
    <property type="term" value="C:host cell nucleus"/>
    <property type="evidence" value="ECO:0007669"/>
    <property type="project" value="UniProtKB-SubCell"/>
</dbReference>
<dbReference type="GO" id="GO:0039588">
    <property type="term" value="P:symbiont-mediated suppression of host antigen processing and presentation"/>
    <property type="evidence" value="ECO:0007669"/>
    <property type="project" value="UniProtKB-KW"/>
</dbReference>
<dbReference type="InterPro" id="IPR008026">
    <property type="entry name" value="Herpes_ICP47"/>
</dbReference>
<dbReference type="Pfam" id="PF05363">
    <property type="entry name" value="Herpes_US12"/>
    <property type="match status" value="1"/>
</dbReference>
<accession>P60504</accession>